<sequence length="19" mass="2310">GFIMEFAENLILRRMEDPK</sequence>
<name>NUO6_SOLTU</name>
<proteinExistence type="evidence at protein level"/>
<organism>
    <name type="scientific">Solanum tuberosum</name>
    <name type="common">Potato</name>
    <dbReference type="NCBI Taxonomy" id="4113"/>
    <lineage>
        <taxon>Eukaryota</taxon>
        <taxon>Viridiplantae</taxon>
        <taxon>Streptophyta</taxon>
        <taxon>Embryophyta</taxon>
        <taxon>Tracheophyta</taxon>
        <taxon>Spermatophyta</taxon>
        <taxon>Magnoliopsida</taxon>
        <taxon>eudicotyledons</taxon>
        <taxon>Gunneridae</taxon>
        <taxon>Pentapetalae</taxon>
        <taxon>asterids</taxon>
        <taxon>lamiids</taxon>
        <taxon>Solanales</taxon>
        <taxon>Solanaceae</taxon>
        <taxon>Solanoideae</taxon>
        <taxon>Solaneae</taxon>
        <taxon>Solanum</taxon>
    </lineage>
</organism>
<protein>
    <recommendedName>
        <fullName>NADH-ubiquinone oxidoreductase 11 kDa subunit</fullName>
        <ecNumber>7.1.1.2</ecNumber>
    </recommendedName>
    <alternativeName>
        <fullName>Complex I-11 kDa</fullName>
        <shortName>CI-11kD</shortName>
    </alternativeName>
</protein>
<comment type="function">
    <text>Transfer of electrons from NADH to the respiratory chain. The immediate electron acceptor for the enzyme is believed to be ubiquinone.</text>
</comment>
<comment type="catalytic activity">
    <reaction>
        <text>a ubiquinone + NADH + 5 H(+)(in) = a ubiquinol + NAD(+) + 4 H(+)(out)</text>
        <dbReference type="Rhea" id="RHEA:29091"/>
        <dbReference type="Rhea" id="RHEA-COMP:9565"/>
        <dbReference type="Rhea" id="RHEA-COMP:9566"/>
        <dbReference type="ChEBI" id="CHEBI:15378"/>
        <dbReference type="ChEBI" id="CHEBI:16389"/>
        <dbReference type="ChEBI" id="CHEBI:17976"/>
        <dbReference type="ChEBI" id="CHEBI:57540"/>
        <dbReference type="ChEBI" id="CHEBI:57945"/>
        <dbReference type="EC" id="7.1.1.2"/>
    </reaction>
</comment>
<comment type="subunit">
    <text>Complex I is composed of about 30 different subunits.</text>
</comment>
<comment type="subcellular location">
    <subcellularLocation>
        <location>Mitochondrion inner membrane</location>
        <topology>Peripheral membrane protein</topology>
        <orientation>Matrix side</orientation>
    </subcellularLocation>
</comment>
<accession>P80729</accession>
<feature type="chain" id="PRO_0000118853" description="NADH-ubiquinone oxidoreductase 11 kDa subunit">
    <location>
        <begin position="1"/>
        <end position="19" status="greater than"/>
    </location>
</feature>
<feature type="non-terminal residue">
    <location>
        <position position="19"/>
    </location>
</feature>
<reference key="1">
    <citation type="submission" date="1996-12" db="UniProtKB">
        <authorList>
            <person name="Herz U."/>
            <person name="Grohmann L."/>
        </authorList>
    </citation>
    <scope>PROTEIN SEQUENCE</scope>
    <source>
        <strain>cv. Bintje</strain>
        <tissue>Tuber</tissue>
    </source>
</reference>
<dbReference type="EC" id="7.1.1.2"/>
<dbReference type="PaxDb" id="4113-PGSC0003DMT400045578"/>
<dbReference type="eggNOG" id="ENOG502S3YQ">
    <property type="taxonomic scope" value="Eukaryota"/>
</dbReference>
<dbReference type="InParanoid" id="P80729"/>
<dbReference type="Proteomes" id="UP000011115">
    <property type="component" value="Unassembled WGS sequence"/>
</dbReference>
<dbReference type="GO" id="GO:0005743">
    <property type="term" value="C:mitochondrial inner membrane"/>
    <property type="evidence" value="ECO:0007669"/>
    <property type="project" value="UniProtKB-SubCell"/>
</dbReference>
<dbReference type="GO" id="GO:0008137">
    <property type="term" value="F:NADH dehydrogenase (ubiquinone) activity"/>
    <property type="evidence" value="ECO:0007669"/>
    <property type="project" value="UniProtKB-EC"/>
</dbReference>
<dbReference type="InterPro" id="IPR035204">
    <property type="entry name" value="NDUFB11"/>
</dbReference>
<dbReference type="Pfam" id="PF17250">
    <property type="entry name" value="NDUFB11"/>
    <property type="match status" value="1"/>
</dbReference>
<keyword id="KW-0903">Direct protein sequencing</keyword>
<keyword id="KW-0472">Membrane</keyword>
<keyword id="KW-0496">Mitochondrion</keyword>
<keyword id="KW-0999">Mitochondrion inner membrane</keyword>
<keyword id="KW-0520">NAD</keyword>
<keyword id="KW-0560">Oxidoreductase</keyword>
<keyword id="KW-1185">Reference proteome</keyword>
<keyword id="KW-1278">Translocase</keyword>
<keyword id="KW-0830">Ubiquinone</keyword>